<dbReference type="EC" id="3.-.-.-"/>
<dbReference type="EMBL" id="AE005174">
    <property type="protein sequence ID" value="AAG56857.1"/>
    <property type="status" value="ALT_INIT"/>
    <property type="molecule type" value="Genomic_DNA"/>
</dbReference>
<dbReference type="EMBL" id="BA000007">
    <property type="protein sequence ID" value="BAB36000.2"/>
    <property type="molecule type" value="Genomic_DNA"/>
</dbReference>
<dbReference type="PIR" id="A90951">
    <property type="entry name" value="A90951"/>
</dbReference>
<dbReference type="PIR" id="E85799">
    <property type="entry name" value="E85799"/>
</dbReference>
<dbReference type="RefSeq" id="NP_310604.2">
    <property type="nucleotide sequence ID" value="NC_002695.1"/>
</dbReference>
<dbReference type="RefSeq" id="WP_000891621.1">
    <property type="nucleotide sequence ID" value="NZ_VOAI01000010.1"/>
</dbReference>
<dbReference type="SMR" id="P0ADI8"/>
<dbReference type="STRING" id="155864.Z2920"/>
<dbReference type="DNASU" id="961840"/>
<dbReference type="GeneID" id="914157"/>
<dbReference type="KEGG" id="ece:Z2920"/>
<dbReference type="KEGG" id="ecs:ECs_2577"/>
<dbReference type="PATRIC" id="fig|386585.9.peg.2701"/>
<dbReference type="eggNOG" id="COG1335">
    <property type="taxonomic scope" value="Bacteria"/>
</dbReference>
<dbReference type="HOGENOM" id="CLU_068979_8_2_6"/>
<dbReference type="OMA" id="CGIATNI"/>
<dbReference type="Proteomes" id="UP000000558">
    <property type="component" value="Chromosome"/>
</dbReference>
<dbReference type="Proteomes" id="UP000002519">
    <property type="component" value="Chromosome"/>
</dbReference>
<dbReference type="GO" id="GO:0016787">
    <property type="term" value="F:hydrolase activity"/>
    <property type="evidence" value="ECO:0007669"/>
    <property type="project" value="UniProtKB-KW"/>
</dbReference>
<dbReference type="CDD" id="cd00431">
    <property type="entry name" value="cysteine_hydrolases"/>
    <property type="match status" value="1"/>
</dbReference>
<dbReference type="FunFam" id="3.40.50.850:FF:000005">
    <property type="entry name" value="Isochorismatase hydrolase"/>
    <property type="match status" value="1"/>
</dbReference>
<dbReference type="Gene3D" id="3.40.50.850">
    <property type="entry name" value="Isochorismatase-like"/>
    <property type="match status" value="1"/>
</dbReference>
<dbReference type="InterPro" id="IPR000868">
    <property type="entry name" value="Isochorismatase-like_dom"/>
</dbReference>
<dbReference type="InterPro" id="IPR050272">
    <property type="entry name" value="Isochorismatase-like_hydrls"/>
</dbReference>
<dbReference type="InterPro" id="IPR036380">
    <property type="entry name" value="Isochorismatase-like_sf"/>
</dbReference>
<dbReference type="NCBIfam" id="NF008517">
    <property type="entry name" value="PRK11440.1"/>
    <property type="match status" value="1"/>
</dbReference>
<dbReference type="PANTHER" id="PTHR43540:SF7">
    <property type="entry name" value="ISOCHORISMATASE FAMILY PROTEIN YECD"/>
    <property type="match status" value="1"/>
</dbReference>
<dbReference type="PANTHER" id="PTHR43540">
    <property type="entry name" value="PEROXYUREIDOACRYLATE/UREIDOACRYLATE AMIDOHYDROLASE-RELATED"/>
    <property type="match status" value="1"/>
</dbReference>
<dbReference type="Pfam" id="PF00857">
    <property type="entry name" value="Isochorismatase"/>
    <property type="match status" value="1"/>
</dbReference>
<dbReference type="SUPFAM" id="SSF52499">
    <property type="entry name" value="Isochorismatase-like hydrolases"/>
    <property type="match status" value="1"/>
</dbReference>
<sequence length="188" mass="20452">MLELNAKTTALVVIDLQEGILPFAGGPHTADEVVNRAGKLAAKFRASGQPVFLVRVGWSADYAEALKQPVDAPSPAKVLPENWWQHPAALGATDSDIEIIKRQWGAFYGTDLELQLRRRGIDTIVLCGISTNIGVESTARNAWELGFNLVIAEDACSAASAEQHNNSINHIYPRIARVRSVEEILNAL</sequence>
<protein>
    <recommendedName>
        <fullName>Uncharacterized isochorismatase family protein YecD</fullName>
        <ecNumber>3.-.-.-</ecNumber>
    </recommendedName>
</protein>
<feature type="chain" id="PRO_0000201832" description="Uncharacterized isochorismatase family protein YecD">
    <location>
        <begin position="1"/>
        <end position="188"/>
    </location>
</feature>
<organism>
    <name type="scientific">Escherichia coli O157:H7</name>
    <dbReference type="NCBI Taxonomy" id="83334"/>
    <lineage>
        <taxon>Bacteria</taxon>
        <taxon>Pseudomonadati</taxon>
        <taxon>Pseudomonadota</taxon>
        <taxon>Gammaproteobacteria</taxon>
        <taxon>Enterobacterales</taxon>
        <taxon>Enterobacteriaceae</taxon>
        <taxon>Escherichia</taxon>
    </lineage>
</organism>
<keyword id="KW-0378">Hydrolase</keyword>
<keyword id="KW-1185">Reference proteome</keyword>
<name>YECD_ECO57</name>
<proteinExistence type="inferred from homology"/>
<accession>P0ADI8</accession>
<accession>P37347</accession>
<accession>P76287</accession>
<gene>
    <name type="primary">yecD</name>
    <name type="ordered locus">Z2920</name>
    <name type="ordered locus">ECs2577</name>
</gene>
<evidence type="ECO:0000305" key="1"/>
<reference key="1">
    <citation type="journal article" date="2001" name="Nature">
        <title>Genome sequence of enterohaemorrhagic Escherichia coli O157:H7.</title>
        <authorList>
            <person name="Perna N.T."/>
            <person name="Plunkett G. III"/>
            <person name="Burland V."/>
            <person name="Mau B."/>
            <person name="Glasner J.D."/>
            <person name="Rose D.J."/>
            <person name="Mayhew G.F."/>
            <person name="Evans P.S."/>
            <person name="Gregor J."/>
            <person name="Kirkpatrick H.A."/>
            <person name="Posfai G."/>
            <person name="Hackett J."/>
            <person name="Klink S."/>
            <person name="Boutin A."/>
            <person name="Shao Y."/>
            <person name="Miller L."/>
            <person name="Grotbeck E.J."/>
            <person name="Davis N.W."/>
            <person name="Lim A."/>
            <person name="Dimalanta E.T."/>
            <person name="Potamousis K."/>
            <person name="Apodaca J."/>
            <person name="Anantharaman T.S."/>
            <person name="Lin J."/>
            <person name="Yen G."/>
            <person name="Schwartz D.C."/>
            <person name="Welch R.A."/>
            <person name="Blattner F.R."/>
        </authorList>
    </citation>
    <scope>NUCLEOTIDE SEQUENCE [LARGE SCALE GENOMIC DNA]</scope>
    <source>
        <strain>O157:H7 / EDL933 / ATCC 700927 / EHEC</strain>
    </source>
</reference>
<reference key="2">
    <citation type="journal article" date="2001" name="DNA Res.">
        <title>Complete genome sequence of enterohemorrhagic Escherichia coli O157:H7 and genomic comparison with a laboratory strain K-12.</title>
        <authorList>
            <person name="Hayashi T."/>
            <person name="Makino K."/>
            <person name="Ohnishi M."/>
            <person name="Kurokawa K."/>
            <person name="Ishii K."/>
            <person name="Yokoyama K."/>
            <person name="Han C.-G."/>
            <person name="Ohtsubo E."/>
            <person name="Nakayama K."/>
            <person name="Murata T."/>
            <person name="Tanaka M."/>
            <person name="Tobe T."/>
            <person name="Iida T."/>
            <person name="Takami H."/>
            <person name="Honda T."/>
            <person name="Sasakawa C."/>
            <person name="Ogasawara N."/>
            <person name="Yasunaga T."/>
            <person name="Kuhara S."/>
            <person name="Shiba T."/>
            <person name="Hattori M."/>
            <person name="Shinagawa H."/>
        </authorList>
    </citation>
    <scope>NUCLEOTIDE SEQUENCE [LARGE SCALE GENOMIC DNA]</scope>
    <source>
        <strain>O157:H7 / Sakai / RIMD 0509952 / EHEC</strain>
    </source>
</reference>
<comment type="similarity">
    <text evidence="1">Belongs to the isochorismatase family.</text>
</comment>
<comment type="sequence caution" evidence="1">
    <conflict type="erroneous initiation">
        <sequence resource="EMBL-CDS" id="AAG56857"/>
    </conflict>
    <text>Extended N-terminus.</text>
</comment>